<comment type="subunit">
    <text evidence="1">Part of the 50S ribosomal subunit.</text>
</comment>
<comment type="similarity">
    <text evidence="1">Belongs to the universal ribosomal protein uL30 family.</text>
</comment>
<accession>B7IHW4</accession>
<evidence type="ECO:0000255" key="1">
    <source>
        <dbReference type="HAMAP-Rule" id="MF_01371"/>
    </source>
</evidence>
<evidence type="ECO:0000305" key="2"/>
<proteinExistence type="inferred from homology"/>
<dbReference type="EMBL" id="CP001185">
    <property type="protein sequence ID" value="ACJ75678.1"/>
    <property type="molecule type" value="Genomic_DNA"/>
</dbReference>
<dbReference type="RefSeq" id="WP_004101469.1">
    <property type="nucleotide sequence ID" value="NC_011653.1"/>
</dbReference>
<dbReference type="SMR" id="B7IHW4"/>
<dbReference type="STRING" id="484019.THA_1233"/>
<dbReference type="KEGG" id="taf:THA_1233"/>
<dbReference type="eggNOG" id="COG1841">
    <property type="taxonomic scope" value="Bacteria"/>
</dbReference>
<dbReference type="HOGENOM" id="CLU_131047_2_1_0"/>
<dbReference type="OrthoDB" id="9812790at2"/>
<dbReference type="Proteomes" id="UP000002453">
    <property type="component" value="Chromosome"/>
</dbReference>
<dbReference type="GO" id="GO:0022625">
    <property type="term" value="C:cytosolic large ribosomal subunit"/>
    <property type="evidence" value="ECO:0007669"/>
    <property type="project" value="TreeGrafter"/>
</dbReference>
<dbReference type="GO" id="GO:0003735">
    <property type="term" value="F:structural constituent of ribosome"/>
    <property type="evidence" value="ECO:0007669"/>
    <property type="project" value="InterPro"/>
</dbReference>
<dbReference type="GO" id="GO:0006412">
    <property type="term" value="P:translation"/>
    <property type="evidence" value="ECO:0007669"/>
    <property type="project" value="UniProtKB-UniRule"/>
</dbReference>
<dbReference type="CDD" id="cd01658">
    <property type="entry name" value="Ribosomal_L30"/>
    <property type="match status" value="1"/>
</dbReference>
<dbReference type="FunFam" id="3.30.1390.20:FF:000001">
    <property type="entry name" value="50S ribosomal protein L30"/>
    <property type="match status" value="1"/>
</dbReference>
<dbReference type="Gene3D" id="3.30.1390.20">
    <property type="entry name" value="Ribosomal protein L30, ferredoxin-like fold domain"/>
    <property type="match status" value="1"/>
</dbReference>
<dbReference type="HAMAP" id="MF_01371_B">
    <property type="entry name" value="Ribosomal_uL30_B"/>
    <property type="match status" value="1"/>
</dbReference>
<dbReference type="InterPro" id="IPR036919">
    <property type="entry name" value="Ribo_uL30_ferredoxin-like_sf"/>
</dbReference>
<dbReference type="InterPro" id="IPR005996">
    <property type="entry name" value="Ribosomal_uL30_bac-type"/>
</dbReference>
<dbReference type="InterPro" id="IPR018038">
    <property type="entry name" value="Ribosomal_uL30_CS"/>
</dbReference>
<dbReference type="InterPro" id="IPR016082">
    <property type="entry name" value="Ribosomal_uL30_ferredoxin-like"/>
</dbReference>
<dbReference type="NCBIfam" id="TIGR01308">
    <property type="entry name" value="rpmD_bact"/>
    <property type="match status" value="1"/>
</dbReference>
<dbReference type="PANTHER" id="PTHR15892:SF2">
    <property type="entry name" value="LARGE RIBOSOMAL SUBUNIT PROTEIN UL30M"/>
    <property type="match status" value="1"/>
</dbReference>
<dbReference type="PANTHER" id="PTHR15892">
    <property type="entry name" value="MITOCHONDRIAL RIBOSOMAL PROTEIN L30"/>
    <property type="match status" value="1"/>
</dbReference>
<dbReference type="Pfam" id="PF00327">
    <property type="entry name" value="Ribosomal_L30"/>
    <property type="match status" value="1"/>
</dbReference>
<dbReference type="PIRSF" id="PIRSF002211">
    <property type="entry name" value="Ribosomal_L30_bac-type"/>
    <property type="match status" value="1"/>
</dbReference>
<dbReference type="SUPFAM" id="SSF55129">
    <property type="entry name" value="Ribosomal protein L30p/L7e"/>
    <property type="match status" value="1"/>
</dbReference>
<dbReference type="PROSITE" id="PS00634">
    <property type="entry name" value="RIBOSOMAL_L30"/>
    <property type="match status" value="1"/>
</dbReference>
<name>RL30_THEAB</name>
<organism>
    <name type="scientific">Thermosipho africanus (strain TCF52B)</name>
    <dbReference type="NCBI Taxonomy" id="484019"/>
    <lineage>
        <taxon>Bacteria</taxon>
        <taxon>Thermotogati</taxon>
        <taxon>Thermotogota</taxon>
        <taxon>Thermotogae</taxon>
        <taxon>Thermotogales</taxon>
        <taxon>Fervidobacteriaceae</taxon>
        <taxon>Thermosipho</taxon>
    </lineage>
</organism>
<feature type="chain" id="PRO_1000144728" description="Large ribosomal subunit protein uL30">
    <location>
        <begin position="1"/>
        <end position="61"/>
    </location>
</feature>
<protein>
    <recommendedName>
        <fullName evidence="1">Large ribosomal subunit protein uL30</fullName>
    </recommendedName>
    <alternativeName>
        <fullName evidence="2">50S ribosomal protein L30</fullName>
    </alternativeName>
</protein>
<keyword id="KW-1185">Reference proteome</keyword>
<keyword id="KW-0687">Ribonucleoprotein</keyword>
<keyword id="KW-0689">Ribosomal protein</keyword>
<gene>
    <name evidence="1" type="primary">rpmD</name>
    <name type="ordered locus">THA_1233</name>
</gene>
<reference key="1">
    <citation type="journal article" date="2009" name="J. Bacteriol.">
        <title>The genome of Thermosipho africanus TCF52B: lateral genetic connections to the Firmicutes and Archaea.</title>
        <authorList>
            <person name="Nesboe C.L."/>
            <person name="Bapteste E."/>
            <person name="Curtis B."/>
            <person name="Dahle H."/>
            <person name="Lopez P."/>
            <person name="Macleod D."/>
            <person name="Dlutek M."/>
            <person name="Bowman S."/>
            <person name="Zhaxybayeva O."/>
            <person name="Birkeland N.-K."/>
            <person name="Doolittle W.F."/>
        </authorList>
    </citation>
    <scope>NUCLEOTIDE SEQUENCE [LARGE SCALE GENOMIC DNA]</scope>
    <source>
        <strain>TCF52B</strain>
    </source>
</reference>
<sequence>MKKLKITLVKSPIGYKYDQKDTVKRLGLRKLNSTVIKDDVPQIRGMIRKVRHLVKVEEIEE</sequence>